<protein>
    <recommendedName>
        <fullName evidence="1">Translation initiation factor 2 subunit beta</fullName>
    </recommendedName>
    <alternativeName>
        <fullName evidence="1">aIF2-beta</fullName>
    </alternativeName>
    <alternativeName>
        <fullName evidence="1">eIF-2-beta</fullName>
    </alternativeName>
</protein>
<feature type="chain" id="PRO_0000137429" description="Translation initiation factor 2 subunit beta">
    <location>
        <begin position="1"/>
        <end position="134"/>
    </location>
</feature>
<comment type="function">
    <text evidence="1">eIF-2 functions in the early steps of protein synthesis by forming a ternary complex with GTP and initiator tRNA.</text>
</comment>
<comment type="subunit">
    <text evidence="1">Heterotrimer composed of an alpha, a beta and a gamma chain.</text>
</comment>
<comment type="similarity">
    <text evidence="1">Belongs to the eIF-2-beta/eIF-5 family.</text>
</comment>
<sequence length="134" mass="15357">MDSEYAALLERAYKLVAPKAQRRAEIPKIEVENMPRKTIIPNFGQIAKRLNRDVYFMAKFFQKELAVPGTLEGDVFTLHGEKSPKVVEAVYDRFIRYYVVCPVCNSIDTELRKEGRIFIMRCLACGASTPVRPL</sequence>
<dbReference type="EMBL" id="AE009441">
    <property type="protein sequence ID" value="AAL63443.1"/>
    <property type="molecule type" value="Genomic_DNA"/>
</dbReference>
<dbReference type="RefSeq" id="WP_011007916.1">
    <property type="nucleotide sequence ID" value="NC_003364.1"/>
</dbReference>
<dbReference type="SMR" id="Q8ZXA6"/>
<dbReference type="FunCoup" id="Q8ZXA6">
    <property type="interactions" value="144"/>
</dbReference>
<dbReference type="STRING" id="178306.PAE1373"/>
<dbReference type="EnsemblBacteria" id="AAL63443">
    <property type="protein sequence ID" value="AAL63443"/>
    <property type="gene ID" value="PAE1373"/>
</dbReference>
<dbReference type="GeneID" id="1465682"/>
<dbReference type="KEGG" id="pai:PAE1373"/>
<dbReference type="PATRIC" id="fig|178306.9.peg.1018"/>
<dbReference type="eggNOG" id="arCOG01640">
    <property type="taxonomic scope" value="Archaea"/>
</dbReference>
<dbReference type="HOGENOM" id="CLU_026663_3_1_2"/>
<dbReference type="InParanoid" id="Q8ZXA6"/>
<dbReference type="Proteomes" id="UP000002439">
    <property type="component" value="Chromosome"/>
</dbReference>
<dbReference type="GO" id="GO:0003743">
    <property type="term" value="F:translation initiation factor activity"/>
    <property type="evidence" value="ECO:0000318"/>
    <property type="project" value="GO_Central"/>
</dbReference>
<dbReference type="Gene3D" id="3.30.30.170">
    <property type="match status" value="1"/>
</dbReference>
<dbReference type="HAMAP" id="MF_00232">
    <property type="entry name" value="eIF_2_beta"/>
    <property type="match status" value="1"/>
</dbReference>
<dbReference type="InterPro" id="IPR045196">
    <property type="entry name" value="IF2/IF5"/>
</dbReference>
<dbReference type="InterPro" id="IPR004458">
    <property type="entry name" value="TIF2_bsu_arc"/>
</dbReference>
<dbReference type="InterPro" id="IPR002735">
    <property type="entry name" value="Transl_init_fac_IF2/IF5_dom"/>
</dbReference>
<dbReference type="InterPro" id="IPR016189">
    <property type="entry name" value="Transl_init_fac_IF2/IF5_N"/>
</dbReference>
<dbReference type="InterPro" id="IPR016190">
    <property type="entry name" value="Transl_init_fac_IF2/IF5_Zn-bd"/>
</dbReference>
<dbReference type="NCBIfam" id="NF003067">
    <property type="entry name" value="PRK03988.1"/>
    <property type="match status" value="1"/>
</dbReference>
<dbReference type="PANTHER" id="PTHR23001">
    <property type="entry name" value="EUKARYOTIC TRANSLATION INITIATION FACTOR"/>
    <property type="match status" value="1"/>
</dbReference>
<dbReference type="PANTHER" id="PTHR23001:SF3">
    <property type="entry name" value="EUKARYOTIC TRANSLATION INITIATION FACTOR 2 SUBUNIT 2"/>
    <property type="match status" value="1"/>
</dbReference>
<dbReference type="Pfam" id="PF01873">
    <property type="entry name" value="eIF-5_eIF-2B"/>
    <property type="match status" value="1"/>
</dbReference>
<dbReference type="SMART" id="SM00653">
    <property type="entry name" value="eIF2B_5"/>
    <property type="match status" value="1"/>
</dbReference>
<dbReference type="SUPFAM" id="SSF100966">
    <property type="entry name" value="Translation initiation factor 2 beta, aIF2beta, N-terminal domain"/>
    <property type="match status" value="1"/>
</dbReference>
<dbReference type="SUPFAM" id="SSF75689">
    <property type="entry name" value="Zinc-binding domain of translation initiation factor 2 beta"/>
    <property type="match status" value="1"/>
</dbReference>
<reference key="1">
    <citation type="journal article" date="2002" name="Proc. Natl. Acad. Sci. U.S.A.">
        <title>Genome sequence of the hyperthermophilic crenarchaeon Pyrobaculum aerophilum.</title>
        <authorList>
            <person name="Fitz-Gibbon S.T."/>
            <person name="Ladner H."/>
            <person name="Kim U.-J."/>
            <person name="Stetter K.O."/>
            <person name="Simon M.I."/>
            <person name="Miller J.H."/>
        </authorList>
    </citation>
    <scope>NUCLEOTIDE SEQUENCE [LARGE SCALE GENOMIC DNA]</scope>
    <source>
        <strain>ATCC 51768 / DSM 7523 / JCM 9630 / CIP 104966 / NBRC 100827 / IM2</strain>
    </source>
</reference>
<proteinExistence type="inferred from homology"/>
<evidence type="ECO:0000255" key="1">
    <source>
        <dbReference type="HAMAP-Rule" id="MF_00232"/>
    </source>
</evidence>
<organism>
    <name type="scientific">Pyrobaculum aerophilum (strain ATCC 51768 / DSM 7523 / JCM 9630 / CIP 104966 / NBRC 100827 / IM2)</name>
    <dbReference type="NCBI Taxonomy" id="178306"/>
    <lineage>
        <taxon>Archaea</taxon>
        <taxon>Thermoproteota</taxon>
        <taxon>Thermoprotei</taxon>
        <taxon>Thermoproteales</taxon>
        <taxon>Thermoproteaceae</taxon>
        <taxon>Pyrobaculum</taxon>
    </lineage>
</organism>
<keyword id="KW-0396">Initiation factor</keyword>
<keyword id="KW-0648">Protein biosynthesis</keyword>
<keyword id="KW-1185">Reference proteome</keyword>
<name>IF2B_PYRAE</name>
<gene>
    <name evidence="1" type="primary">eif2b</name>
    <name type="ordered locus">PAE1373</name>
</gene>
<accession>Q8ZXA6</accession>